<organism>
    <name type="scientific">Bradyrhizobium sp. (strain ORS 278)</name>
    <dbReference type="NCBI Taxonomy" id="114615"/>
    <lineage>
        <taxon>Bacteria</taxon>
        <taxon>Pseudomonadati</taxon>
        <taxon>Pseudomonadota</taxon>
        <taxon>Alphaproteobacteria</taxon>
        <taxon>Hyphomicrobiales</taxon>
        <taxon>Nitrobacteraceae</taxon>
        <taxon>Bradyrhizobium</taxon>
    </lineage>
</organism>
<accession>A4YUF4</accession>
<reference key="1">
    <citation type="journal article" date="2007" name="Science">
        <title>Legumes symbioses: absence of nod genes in photosynthetic bradyrhizobia.</title>
        <authorList>
            <person name="Giraud E."/>
            <person name="Moulin L."/>
            <person name="Vallenet D."/>
            <person name="Barbe V."/>
            <person name="Cytryn E."/>
            <person name="Avarre J.-C."/>
            <person name="Jaubert M."/>
            <person name="Simon D."/>
            <person name="Cartieaux F."/>
            <person name="Prin Y."/>
            <person name="Bena G."/>
            <person name="Hannibal L."/>
            <person name="Fardoux J."/>
            <person name="Kojadinovic M."/>
            <person name="Vuillet L."/>
            <person name="Lajus A."/>
            <person name="Cruveiller S."/>
            <person name="Rouy Z."/>
            <person name="Mangenot S."/>
            <person name="Segurens B."/>
            <person name="Dossat C."/>
            <person name="Franck W.L."/>
            <person name="Chang W.-S."/>
            <person name="Saunders E."/>
            <person name="Bruce D."/>
            <person name="Richardson P."/>
            <person name="Normand P."/>
            <person name="Dreyfus B."/>
            <person name="Pignol D."/>
            <person name="Stacey G."/>
            <person name="Emerich D."/>
            <person name="Vermeglio A."/>
            <person name="Medigue C."/>
            <person name="Sadowsky M."/>
        </authorList>
    </citation>
    <scope>NUCLEOTIDE SEQUENCE [LARGE SCALE GENOMIC DNA]</scope>
    <source>
        <strain>ORS 278</strain>
    </source>
</reference>
<dbReference type="EC" id="2.7.7.23" evidence="1"/>
<dbReference type="EC" id="2.3.1.157" evidence="1"/>
<dbReference type="EMBL" id="CU234118">
    <property type="protein sequence ID" value="CAL77530.1"/>
    <property type="status" value="ALT_INIT"/>
    <property type="molecule type" value="Genomic_DNA"/>
</dbReference>
<dbReference type="RefSeq" id="WP_041756655.1">
    <property type="nucleotide sequence ID" value="NC_009445.1"/>
</dbReference>
<dbReference type="SMR" id="A4YUF4"/>
<dbReference type="STRING" id="114615.BRADO3760"/>
<dbReference type="KEGG" id="bra:BRADO3760"/>
<dbReference type="eggNOG" id="COG1207">
    <property type="taxonomic scope" value="Bacteria"/>
</dbReference>
<dbReference type="HOGENOM" id="CLU_029499_15_2_5"/>
<dbReference type="OrthoDB" id="9775031at2"/>
<dbReference type="UniPathway" id="UPA00113">
    <property type="reaction ID" value="UER00532"/>
</dbReference>
<dbReference type="UniPathway" id="UPA00113">
    <property type="reaction ID" value="UER00533"/>
</dbReference>
<dbReference type="UniPathway" id="UPA00973"/>
<dbReference type="Proteomes" id="UP000001994">
    <property type="component" value="Chromosome"/>
</dbReference>
<dbReference type="GO" id="GO:0005737">
    <property type="term" value="C:cytoplasm"/>
    <property type="evidence" value="ECO:0007669"/>
    <property type="project" value="UniProtKB-SubCell"/>
</dbReference>
<dbReference type="GO" id="GO:0016020">
    <property type="term" value="C:membrane"/>
    <property type="evidence" value="ECO:0007669"/>
    <property type="project" value="GOC"/>
</dbReference>
<dbReference type="GO" id="GO:0019134">
    <property type="term" value="F:glucosamine-1-phosphate N-acetyltransferase activity"/>
    <property type="evidence" value="ECO:0007669"/>
    <property type="project" value="UniProtKB-UniRule"/>
</dbReference>
<dbReference type="GO" id="GO:0000287">
    <property type="term" value="F:magnesium ion binding"/>
    <property type="evidence" value="ECO:0007669"/>
    <property type="project" value="UniProtKB-UniRule"/>
</dbReference>
<dbReference type="GO" id="GO:0003977">
    <property type="term" value="F:UDP-N-acetylglucosamine diphosphorylase activity"/>
    <property type="evidence" value="ECO:0007669"/>
    <property type="project" value="UniProtKB-UniRule"/>
</dbReference>
<dbReference type="GO" id="GO:0000902">
    <property type="term" value="P:cell morphogenesis"/>
    <property type="evidence" value="ECO:0007669"/>
    <property type="project" value="UniProtKB-UniRule"/>
</dbReference>
<dbReference type="GO" id="GO:0071555">
    <property type="term" value="P:cell wall organization"/>
    <property type="evidence" value="ECO:0007669"/>
    <property type="project" value="UniProtKB-KW"/>
</dbReference>
<dbReference type="GO" id="GO:0009245">
    <property type="term" value="P:lipid A biosynthetic process"/>
    <property type="evidence" value="ECO:0007669"/>
    <property type="project" value="UniProtKB-UniRule"/>
</dbReference>
<dbReference type="GO" id="GO:0009252">
    <property type="term" value="P:peptidoglycan biosynthetic process"/>
    <property type="evidence" value="ECO:0007669"/>
    <property type="project" value="UniProtKB-UniRule"/>
</dbReference>
<dbReference type="GO" id="GO:0008360">
    <property type="term" value="P:regulation of cell shape"/>
    <property type="evidence" value="ECO:0007669"/>
    <property type="project" value="UniProtKB-KW"/>
</dbReference>
<dbReference type="GO" id="GO:0006048">
    <property type="term" value="P:UDP-N-acetylglucosamine biosynthetic process"/>
    <property type="evidence" value="ECO:0007669"/>
    <property type="project" value="UniProtKB-UniPathway"/>
</dbReference>
<dbReference type="CDD" id="cd02540">
    <property type="entry name" value="GT2_GlmU_N_bac"/>
    <property type="match status" value="1"/>
</dbReference>
<dbReference type="CDD" id="cd03353">
    <property type="entry name" value="LbH_GlmU_C"/>
    <property type="match status" value="1"/>
</dbReference>
<dbReference type="Gene3D" id="2.160.10.10">
    <property type="entry name" value="Hexapeptide repeat proteins"/>
    <property type="match status" value="1"/>
</dbReference>
<dbReference type="Gene3D" id="3.90.550.10">
    <property type="entry name" value="Spore Coat Polysaccharide Biosynthesis Protein SpsA, Chain A"/>
    <property type="match status" value="1"/>
</dbReference>
<dbReference type="HAMAP" id="MF_01631">
    <property type="entry name" value="GlmU"/>
    <property type="match status" value="1"/>
</dbReference>
<dbReference type="InterPro" id="IPR005882">
    <property type="entry name" value="Bifunctional_GlmU"/>
</dbReference>
<dbReference type="InterPro" id="IPR050065">
    <property type="entry name" value="GlmU-like"/>
</dbReference>
<dbReference type="InterPro" id="IPR038009">
    <property type="entry name" value="GlmU_C_LbH"/>
</dbReference>
<dbReference type="InterPro" id="IPR001451">
    <property type="entry name" value="Hexapep"/>
</dbReference>
<dbReference type="InterPro" id="IPR018357">
    <property type="entry name" value="Hexapep_transf_CS"/>
</dbReference>
<dbReference type="InterPro" id="IPR025877">
    <property type="entry name" value="MobA-like_NTP_Trfase"/>
</dbReference>
<dbReference type="InterPro" id="IPR029044">
    <property type="entry name" value="Nucleotide-diphossugar_trans"/>
</dbReference>
<dbReference type="InterPro" id="IPR011004">
    <property type="entry name" value="Trimer_LpxA-like_sf"/>
</dbReference>
<dbReference type="NCBIfam" id="TIGR01173">
    <property type="entry name" value="glmU"/>
    <property type="match status" value="1"/>
</dbReference>
<dbReference type="NCBIfam" id="NF010933">
    <property type="entry name" value="PRK14353.1"/>
    <property type="match status" value="1"/>
</dbReference>
<dbReference type="PANTHER" id="PTHR43584:SF3">
    <property type="entry name" value="BIFUNCTIONAL PROTEIN GLMU"/>
    <property type="match status" value="1"/>
</dbReference>
<dbReference type="PANTHER" id="PTHR43584">
    <property type="entry name" value="NUCLEOTIDYL TRANSFERASE"/>
    <property type="match status" value="1"/>
</dbReference>
<dbReference type="Pfam" id="PF00132">
    <property type="entry name" value="Hexapep"/>
    <property type="match status" value="2"/>
</dbReference>
<dbReference type="Pfam" id="PF12804">
    <property type="entry name" value="NTP_transf_3"/>
    <property type="match status" value="1"/>
</dbReference>
<dbReference type="SUPFAM" id="SSF53448">
    <property type="entry name" value="Nucleotide-diphospho-sugar transferases"/>
    <property type="match status" value="1"/>
</dbReference>
<dbReference type="SUPFAM" id="SSF51161">
    <property type="entry name" value="Trimeric LpxA-like enzymes"/>
    <property type="match status" value="1"/>
</dbReference>
<dbReference type="PROSITE" id="PS00101">
    <property type="entry name" value="HEXAPEP_TRANSFERASES"/>
    <property type="match status" value="1"/>
</dbReference>
<protein>
    <recommendedName>
        <fullName evidence="1">Bifunctional protein GlmU</fullName>
    </recommendedName>
    <domain>
        <recommendedName>
            <fullName evidence="1">UDP-N-acetylglucosamine pyrophosphorylase</fullName>
            <ecNumber evidence="1">2.7.7.23</ecNumber>
        </recommendedName>
        <alternativeName>
            <fullName evidence="1">N-acetylglucosamine-1-phosphate uridyltransferase</fullName>
        </alternativeName>
    </domain>
    <domain>
        <recommendedName>
            <fullName evidence="1">Glucosamine-1-phosphate N-acetyltransferase</fullName>
            <ecNumber evidence="1">2.3.1.157</ecNumber>
        </recommendedName>
    </domain>
</protein>
<feature type="chain" id="PRO_0000337711" description="Bifunctional protein GlmU">
    <location>
        <begin position="1"/>
        <end position="448"/>
    </location>
</feature>
<feature type="region of interest" description="Pyrophosphorylase" evidence="1">
    <location>
        <begin position="1"/>
        <end position="232"/>
    </location>
</feature>
<feature type="region of interest" description="Linker" evidence="1">
    <location>
        <begin position="233"/>
        <end position="253"/>
    </location>
</feature>
<feature type="region of interest" description="N-acetyltransferase" evidence="1">
    <location>
        <begin position="254"/>
        <end position="448"/>
    </location>
</feature>
<feature type="region of interest" description="Disordered" evidence="2">
    <location>
        <begin position="427"/>
        <end position="448"/>
    </location>
</feature>
<feature type="active site" description="Proton acceptor" evidence="1">
    <location>
        <position position="349"/>
    </location>
</feature>
<feature type="binding site" evidence="1">
    <location>
        <begin position="11"/>
        <end position="14"/>
    </location>
    <ligand>
        <name>UDP-N-acetyl-alpha-D-glucosamine</name>
        <dbReference type="ChEBI" id="CHEBI:57705"/>
    </ligand>
</feature>
<feature type="binding site" evidence="1">
    <location>
        <position position="25"/>
    </location>
    <ligand>
        <name>UDP-N-acetyl-alpha-D-glucosamine</name>
        <dbReference type="ChEBI" id="CHEBI:57705"/>
    </ligand>
</feature>
<feature type="binding site" evidence="1">
    <location>
        <position position="78"/>
    </location>
    <ligand>
        <name>UDP-N-acetyl-alpha-D-glucosamine</name>
        <dbReference type="ChEBI" id="CHEBI:57705"/>
    </ligand>
</feature>
<feature type="binding site" evidence="1">
    <location>
        <begin position="83"/>
        <end position="84"/>
    </location>
    <ligand>
        <name>UDP-N-acetyl-alpha-D-glucosamine</name>
        <dbReference type="ChEBI" id="CHEBI:57705"/>
    </ligand>
</feature>
<feature type="binding site" evidence="1">
    <location>
        <position position="108"/>
    </location>
    <ligand>
        <name>Mg(2+)</name>
        <dbReference type="ChEBI" id="CHEBI:18420"/>
    </ligand>
</feature>
<feature type="binding site" evidence="1">
    <location>
        <position position="144"/>
    </location>
    <ligand>
        <name>UDP-N-acetyl-alpha-D-glucosamine</name>
        <dbReference type="ChEBI" id="CHEBI:57705"/>
    </ligand>
</feature>
<feature type="binding site" evidence="1">
    <location>
        <position position="158"/>
    </location>
    <ligand>
        <name>UDP-N-acetyl-alpha-D-glucosamine</name>
        <dbReference type="ChEBI" id="CHEBI:57705"/>
    </ligand>
</feature>
<feature type="binding site" evidence="1">
    <location>
        <position position="173"/>
    </location>
    <ligand>
        <name>UDP-N-acetyl-alpha-D-glucosamine</name>
        <dbReference type="ChEBI" id="CHEBI:57705"/>
    </ligand>
</feature>
<feature type="binding site" evidence="1">
    <location>
        <position position="230"/>
    </location>
    <ligand>
        <name>Mg(2+)</name>
        <dbReference type="ChEBI" id="CHEBI:18420"/>
    </ligand>
</feature>
<feature type="binding site" evidence="1">
    <location>
        <position position="230"/>
    </location>
    <ligand>
        <name>UDP-N-acetyl-alpha-D-glucosamine</name>
        <dbReference type="ChEBI" id="CHEBI:57705"/>
    </ligand>
</feature>
<feature type="binding site" evidence="1">
    <location>
        <position position="319"/>
    </location>
    <ligand>
        <name>UDP-N-acetyl-alpha-D-glucosamine</name>
        <dbReference type="ChEBI" id="CHEBI:57705"/>
    </ligand>
</feature>
<feature type="binding site" evidence="1">
    <location>
        <position position="337"/>
    </location>
    <ligand>
        <name>UDP-N-acetyl-alpha-D-glucosamine</name>
        <dbReference type="ChEBI" id="CHEBI:57705"/>
    </ligand>
</feature>
<feature type="binding site" evidence="1">
    <location>
        <position position="352"/>
    </location>
    <ligand>
        <name>UDP-N-acetyl-alpha-D-glucosamine</name>
        <dbReference type="ChEBI" id="CHEBI:57705"/>
    </ligand>
</feature>
<feature type="binding site" evidence="1">
    <location>
        <position position="363"/>
    </location>
    <ligand>
        <name>UDP-N-acetyl-alpha-D-glucosamine</name>
        <dbReference type="ChEBI" id="CHEBI:57705"/>
    </ligand>
</feature>
<feature type="binding site" evidence="1">
    <location>
        <position position="366"/>
    </location>
    <ligand>
        <name>acetyl-CoA</name>
        <dbReference type="ChEBI" id="CHEBI:57288"/>
    </ligand>
</feature>
<feature type="binding site" evidence="1">
    <location>
        <begin position="372"/>
        <end position="373"/>
    </location>
    <ligand>
        <name>acetyl-CoA</name>
        <dbReference type="ChEBI" id="CHEBI:57288"/>
    </ligand>
</feature>
<feature type="binding site" evidence="1">
    <location>
        <position position="409"/>
    </location>
    <ligand>
        <name>acetyl-CoA</name>
        <dbReference type="ChEBI" id="CHEBI:57288"/>
    </ligand>
</feature>
<feature type="binding site" evidence="1">
    <location>
        <position position="426"/>
    </location>
    <ligand>
        <name>acetyl-CoA</name>
        <dbReference type="ChEBI" id="CHEBI:57288"/>
    </ligand>
</feature>
<name>GLMU_BRASO</name>
<keyword id="KW-0012">Acyltransferase</keyword>
<keyword id="KW-0133">Cell shape</keyword>
<keyword id="KW-0961">Cell wall biogenesis/degradation</keyword>
<keyword id="KW-0963">Cytoplasm</keyword>
<keyword id="KW-0460">Magnesium</keyword>
<keyword id="KW-0479">Metal-binding</keyword>
<keyword id="KW-0511">Multifunctional enzyme</keyword>
<keyword id="KW-0548">Nucleotidyltransferase</keyword>
<keyword id="KW-0573">Peptidoglycan synthesis</keyword>
<keyword id="KW-1185">Reference proteome</keyword>
<keyword id="KW-0677">Repeat</keyword>
<keyword id="KW-0808">Transferase</keyword>
<evidence type="ECO:0000255" key="1">
    <source>
        <dbReference type="HAMAP-Rule" id="MF_01631"/>
    </source>
</evidence>
<evidence type="ECO:0000256" key="2">
    <source>
        <dbReference type="SAM" id="MobiDB-lite"/>
    </source>
</evidence>
<evidence type="ECO:0000305" key="3"/>
<comment type="function">
    <text evidence="1">Catalyzes the last two sequential reactions in the de novo biosynthetic pathway for UDP-N-acetylglucosamine (UDP-GlcNAc). The C-terminal domain catalyzes the transfer of acetyl group from acetyl coenzyme A to glucosamine-1-phosphate (GlcN-1-P) to produce N-acetylglucosamine-1-phosphate (GlcNAc-1-P), which is converted into UDP-GlcNAc by the transfer of uridine 5-monophosphate (from uridine 5-triphosphate), a reaction catalyzed by the N-terminal domain.</text>
</comment>
<comment type="catalytic activity">
    <reaction evidence="1">
        <text>alpha-D-glucosamine 1-phosphate + acetyl-CoA = N-acetyl-alpha-D-glucosamine 1-phosphate + CoA + H(+)</text>
        <dbReference type="Rhea" id="RHEA:13725"/>
        <dbReference type="ChEBI" id="CHEBI:15378"/>
        <dbReference type="ChEBI" id="CHEBI:57287"/>
        <dbReference type="ChEBI" id="CHEBI:57288"/>
        <dbReference type="ChEBI" id="CHEBI:57776"/>
        <dbReference type="ChEBI" id="CHEBI:58516"/>
        <dbReference type="EC" id="2.3.1.157"/>
    </reaction>
</comment>
<comment type="catalytic activity">
    <reaction evidence="1">
        <text>N-acetyl-alpha-D-glucosamine 1-phosphate + UTP + H(+) = UDP-N-acetyl-alpha-D-glucosamine + diphosphate</text>
        <dbReference type="Rhea" id="RHEA:13509"/>
        <dbReference type="ChEBI" id="CHEBI:15378"/>
        <dbReference type="ChEBI" id="CHEBI:33019"/>
        <dbReference type="ChEBI" id="CHEBI:46398"/>
        <dbReference type="ChEBI" id="CHEBI:57705"/>
        <dbReference type="ChEBI" id="CHEBI:57776"/>
        <dbReference type="EC" id="2.7.7.23"/>
    </reaction>
</comment>
<comment type="cofactor">
    <cofactor evidence="1">
        <name>Mg(2+)</name>
        <dbReference type="ChEBI" id="CHEBI:18420"/>
    </cofactor>
    <text evidence="1">Binds 1 Mg(2+) ion per subunit.</text>
</comment>
<comment type="pathway">
    <text evidence="1">Nucleotide-sugar biosynthesis; UDP-N-acetyl-alpha-D-glucosamine biosynthesis; N-acetyl-alpha-D-glucosamine 1-phosphate from alpha-D-glucosamine 6-phosphate (route II): step 2/2.</text>
</comment>
<comment type="pathway">
    <text evidence="1">Nucleotide-sugar biosynthesis; UDP-N-acetyl-alpha-D-glucosamine biosynthesis; UDP-N-acetyl-alpha-D-glucosamine from N-acetyl-alpha-D-glucosamine 1-phosphate: step 1/1.</text>
</comment>
<comment type="pathway">
    <text evidence="1">Bacterial outer membrane biogenesis; LPS lipid A biosynthesis.</text>
</comment>
<comment type="subunit">
    <text evidence="1">Homotrimer.</text>
</comment>
<comment type="subcellular location">
    <subcellularLocation>
        <location evidence="1">Cytoplasm</location>
    </subcellularLocation>
</comment>
<comment type="similarity">
    <text evidence="1">In the N-terminal section; belongs to the N-acetylglucosamine-1-phosphate uridyltransferase family.</text>
</comment>
<comment type="similarity">
    <text evidence="1">In the C-terminal section; belongs to the transferase hexapeptide repeat family.</text>
</comment>
<comment type="sequence caution" evidence="3">
    <conflict type="erroneous initiation">
        <sequence resource="EMBL-CDS" id="CAL77530"/>
    </conflict>
</comment>
<sequence length="448" mass="46513">MTARSSLTIVLAAGEGTRMRSSLPKVLHPIAGESMLAHVLAAAPQGDGAAIAVVIGPGHDAVEKEAKRLCPDVAIFVQRERLGTAHAVLAAREAIARGADDLLVAFGDTPLITAETFARLRAALAQGAALAVLGFRAVDPTGYGRLLLDGSKLVAIREHADASEAERAITLCNAGVMAMDGRRALAILDKIGNTNSKGEYYLVDAVAIARSQGLDAVVIETSEDEVRGINTKAQLAQAEAAMQARLRQAAMDAGVTLIAPETVYLAADTTFGRDVTIEPFVVIGPGVSIGDGAVVHSFSHVVQSKLGSNTLLGPFARLRPGTSLGDGAKIGNFVEAKAAVLEPGVKVNHLSYIGDAHVGAHSNIGAGTITCNYDGFNKHKTRIGEGAFIGTNTSLVAPINIGARAYIGSGSVITRDVPDDALALERSPQTTKEGAAARFRNAKLRQTK</sequence>
<gene>
    <name evidence="1" type="primary">glmU</name>
    <name type="ordered locus">BRADO3760</name>
</gene>
<proteinExistence type="inferred from homology"/>